<keyword id="KW-0002">3D-structure</keyword>
<keyword id="KW-1185">Reference proteome</keyword>
<feature type="chain" id="PRO_0000462351" description="DNA mimic protein DMP12">
    <location>
        <begin position="1"/>
        <end position="118"/>
    </location>
</feature>
<evidence type="ECO:0000269" key="1">
    <source>
    </source>
</evidence>
<evidence type="ECO:0000303" key="2">
    <source>
    </source>
</evidence>
<evidence type="ECO:0000305" key="3"/>
<evidence type="ECO:0000312" key="4">
    <source>
        <dbReference type="EMBL" id="AAF42432.1"/>
    </source>
</evidence>
<evidence type="ECO:0007744" key="5">
    <source>
        <dbReference type="PDB" id="3W1O"/>
    </source>
</evidence>
<name>DMP12_NEIMB</name>
<proteinExistence type="evidence at protein level"/>
<dbReference type="EMBL" id="AE002098">
    <property type="protein sequence ID" value="AAF42432.1"/>
    <property type="molecule type" value="Genomic_DNA"/>
</dbReference>
<dbReference type="PIR" id="C81005">
    <property type="entry name" value="C81005"/>
</dbReference>
<dbReference type="RefSeq" id="NP_275109.1">
    <property type="nucleotide sequence ID" value="NC_003112.2"/>
</dbReference>
<dbReference type="RefSeq" id="WP_002218226.1">
    <property type="nucleotide sequence ID" value="NC_003112.2"/>
</dbReference>
<dbReference type="PDB" id="3W1O">
    <property type="method" value="X-ray"/>
    <property type="resolution" value="1.85 A"/>
    <property type="chains" value="A/B=1-118"/>
</dbReference>
<dbReference type="PDBsum" id="3W1O"/>
<dbReference type="SMR" id="Q9JXC6"/>
<dbReference type="STRING" id="122586.NMB2123"/>
<dbReference type="PaxDb" id="122586-NMB2123"/>
<dbReference type="KEGG" id="nme:NMB2123"/>
<dbReference type="PATRIC" id="fig|122586.8.peg.2706"/>
<dbReference type="HOGENOM" id="CLU_2070596_0_0_4"/>
<dbReference type="InParanoid" id="Q9JXC6"/>
<dbReference type="EvolutionaryTrace" id="Q9JXC6"/>
<dbReference type="Proteomes" id="UP000000425">
    <property type="component" value="Chromosome"/>
</dbReference>
<dbReference type="GO" id="GO:0046872">
    <property type="term" value="F:metal ion binding"/>
    <property type="evidence" value="ECO:0007669"/>
    <property type="project" value="UniProtKB-KW"/>
</dbReference>
<dbReference type="CDD" id="cd14245">
    <property type="entry name" value="DMP12"/>
    <property type="match status" value="1"/>
</dbReference>
<dbReference type="Gene3D" id="3.40.1760.20">
    <property type="match status" value="1"/>
</dbReference>
<dbReference type="InterPro" id="IPR031891">
    <property type="entry name" value="DMP12"/>
</dbReference>
<dbReference type="InterPro" id="IPR038223">
    <property type="entry name" value="DMP12_sf"/>
</dbReference>
<dbReference type="Pfam" id="PF16779">
    <property type="entry name" value="DMP12"/>
    <property type="match status" value="1"/>
</dbReference>
<sequence>MNEHNLLIFCLKDNVSISEYTEMIDWAYKNIQSETVVEITENQIIEYQNRGLWRLVSEITDNWLFGPSEGDWLIDKESILAVKEKLQNSDFSTEPLVKNIIHVLEYAIKNEKTVIFHF</sequence>
<accession>Q9JXC6</accession>
<comment type="function">
    <text evidence="1">Acts as a DNA mimic (PubMed:23531546). Interacts with the DNA-binding protein HU and partially prevents the binding of HU protein to DNA by occupying the DNA binding sites on the protein (PubMed:23531546). However, the relatively weak affinity of DMP12 for HU suggests that it may not completely block the HU protein-DNA binding, and that DMP12 is more likely to act as a regulator than a competitive inhibitor (PubMed:23531546). It protects HU protein from limited digestion by trypsin in a limited trypsin digestion assay, suggesting that it may serve to protect the HU protein and improve the stability of unbound HU protein (PubMed:23531546).</text>
</comment>
<comment type="subunit">
    <text evidence="1">Monomer (PubMed:23531546). Interacts with the dimeric form of the DNA-binding protein HU (PubMed:23531546).</text>
</comment>
<comment type="domain">
    <text evidence="1">The shape and electrostatic surface of the DMP12 monomer are similar to those of the straight portion of the bent HU-bound DNA and complementary to those of HU protein dimer.</text>
</comment>
<comment type="similarity">
    <text evidence="3">Belongs to the DMP12-like protein family.</text>
</comment>
<gene>
    <name evidence="4" type="ordered locus">NMB2123</name>
</gene>
<protein>
    <recommendedName>
        <fullName evidence="2">DNA mimic protein DMP12</fullName>
    </recommendedName>
    <alternativeName>
        <fullName evidence="2">DNA mimic protein 12 kDa</fullName>
    </alternativeName>
</protein>
<reference evidence="4" key="1">
    <citation type="journal article" date="2000" name="Science">
        <title>Complete genome sequence of Neisseria meningitidis serogroup B strain MC58.</title>
        <authorList>
            <person name="Tettelin H."/>
            <person name="Saunders N.J."/>
            <person name="Heidelberg J.F."/>
            <person name="Jeffries A.C."/>
            <person name="Nelson K.E."/>
            <person name="Eisen J.A."/>
            <person name="Ketchum K.A."/>
            <person name="Hood D.W."/>
            <person name="Peden J.F."/>
            <person name="Dodson R.J."/>
            <person name="Nelson W.C."/>
            <person name="Gwinn M.L."/>
            <person name="DeBoy R.T."/>
            <person name="Peterson J.D."/>
            <person name="Hickey E.K."/>
            <person name="Haft D.H."/>
            <person name="Salzberg S.L."/>
            <person name="White O."/>
            <person name="Fleischmann R.D."/>
            <person name="Dougherty B.A."/>
            <person name="Mason T.M."/>
            <person name="Ciecko A."/>
            <person name="Parksey D.S."/>
            <person name="Blair E."/>
            <person name="Cittone H."/>
            <person name="Clark E.B."/>
            <person name="Cotton M.D."/>
            <person name="Utterback T.R."/>
            <person name="Khouri H.M."/>
            <person name="Qin H."/>
            <person name="Vamathevan J.J."/>
            <person name="Gill J."/>
            <person name="Scarlato V."/>
            <person name="Masignani V."/>
            <person name="Pizza M."/>
            <person name="Grandi G."/>
            <person name="Sun L."/>
            <person name="Smith H.O."/>
            <person name="Fraser C.M."/>
            <person name="Moxon E.R."/>
            <person name="Rappuoli R."/>
            <person name="Venter J.C."/>
        </authorList>
    </citation>
    <scope>NUCLEOTIDE SEQUENCE [LARGE SCALE GENOMIC DNA]</scope>
    <source>
        <strain>ATCC BAA-335 / MC58</strain>
    </source>
</reference>
<reference evidence="5" key="2">
    <citation type="journal article" date="2013" name="Nucleic Acids Res.">
        <title>Neisseria conserved hypothetical protein DMP12 is a DNA mimic that binds to histone-like HU protein.</title>
        <authorList>
            <person name="Wang H.C."/>
            <person name="Wu M.L."/>
            <person name="Ko T.P."/>
            <person name="Wang A.H."/>
        </authorList>
    </citation>
    <scope>X-RAY CRYSTALLOGRAPHY (1.85 ANGSTROMS)</scope>
    <scope>FUNCTION</scope>
    <scope>SUBUNIT</scope>
    <scope>INTERACTION WITH PROTEIN HU</scope>
    <scope>DOMAIN</scope>
    <source>
        <strain>ATCC BAA-335 / MC58</strain>
    </source>
</reference>
<organism>
    <name type="scientific">Neisseria meningitidis serogroup B (strain ATCC BAA-335 / MC58)</name>
    <dbReference type="NCBI Taxonomy" id="122586"/>
    <lineage>
        <taxon>Bacteria</taxon>
        <taxon>Pseudomonadati</taxon>
        <taxon>Pseudomonadota</taxon>
        <taxon>Betaproteobacteria</taxon>
        <taxon>Neisseriales</taxon>
        <taxon>Neisseriaceae</taxon>
        <taxon>Neisseria</taxon>
    </lineage>
</organism>